<proteinExistence type="inferred from homology"/>
<comment type="function">
    <text evidence="1">This is one of the proteins that bind and probably mediate the attachment of the 5S RNA into the large ribosomal subunit, where it forms part of the central protuberance.</text>
</comment>
<comment type="subunit">
    <text evidence="1">Part of the 50S ribosomal subunit; part of the 5S rRNA/L5/L18/L25 subcomplex. Contacts the 5S and 23S rRNAs.</text>
</comment>
<comment type="similarity">
    <text evidence="1">Belongs to the universal ribosomal protein uL18 family.</text>
</comment>
<evidence type="ECO:0000255" key="1">
    <source>
        <dbReference type="HAMAP-Rule" id="MF_01337"/>
    </source>
</evidence>
<evidence type="ECO:0000305" key="2"/>
<dbReference type="EMBL" id="CP001638">
    <property type="protein sequence ID" value="ACS23067.1"/>
    <property type="molecule type" value="Genomic_DNA"/>
</dbReference>
<dbReference type="SMR" id="C5D3T3"/>
<dbReference type="STRING" id="471223.GWCH70_0127"/>
<dbReference type="KEGG" id="gwc:GWCH70_0127"/>
<dbReference type="eggNOG" id="COG0256">
    <property type="taxonomic scope" value="Bacteria"/>
</dbReference>
<dbReference type="HOGENOM" id="CLU_098841_0_1_9"/>
<dbReference type="OrthoDB" id="9810939at2"/>
<dbReference type="GO" id="GO:0022625">
    <property type="term" value="C:cytosolic large ribosomal subunit"/>
    <property type="evidence" value="ECO:0007669"/>
    <property type="project" value="TreeGrafter"/>
</dbReference>
<dbReference type="GO" id="GO:0008097">
    <property type="term" value="F:5S rRNA binding"/>
    <property type="evidence" value="ECO:0007669"/>
    <property type="project" value="TreeGrafter"/>
</dbReference>
<dbReference type="GO" id="GO:0003735">
    <property type="term" value="F:structural constituent of ribosome"/>
    <property type="evidence" value="ECO:0007669"/>
    <property type="project" value="InterPro"/>
</dbReference>
<dbReference type="GO" id="GO:0006412">
    <property type="term" value="P:translation"/>
    <property type="evidence" value="ECO:0007669"/>
    <property type="project" value="UniProtKB-UniRule"/>
</dbReference>
<dbReference type="CDD" id="cd00432">
    <property type="entry name" value="Ribosomal_L18_L5e"/>
    <property type="match status" value="1"/>
</dbReference>
<dbReference type="FunFam" id="3.30.420.100:FF:000001">
    <property type="entry name" value="50S ribosomal protein L18"/>
    <property type="match status" value="1"/>
</dbReference>
<dbReference type="Gene3D" id="3.30.420.100">
    <property type="match status" value="1"/>
</dbReference>
<dbReference type="HAMAP" id="MF_01337_B">
    <property type="entry name" value="Ribosomal_uL18_B"/>
    <property type="match status" value="1"/>
</dbReference>
<dbReference type="InterPro" id="IPR004389">
    <property type="entry name" value="Ribosomal_uL18_bac-type"/>
</dbReference>
<dbReference type="InterPro" id="IPR005484">
    <property type="entry name" value="Ribosomal_uL18_bac/euk"/>
</dbReference>
<dbReference type="NCBIfam" id="TIGR00060">
    <property type="entry name" value="L18_bact"/>
    <property type="match status" value="1"/>
</dbReference>
<dbReference type="PANTHER" id="PTHR12899">
    <property type="entry name" value="39S RIBOSOMAL PROTEIN L18, MITOCHONDRIAL"/>
    <property type="match status" value="1"/>
</dbReference>
<dbReference type="PANTHER" id="PTHR12899:SF3">
    <property type="entry name" value="LARGE RIBOSOMAL SUBUNIT PROTEIN UL18M"/>
    <property type="match status" value="1"/>
</dbReference>
<dbReference type="Pfam" id="PF00861">
    <property type="entry name" value="Ribosomal_L18p"/>
    <property type="match status" value="1"/>
</dbReference>
<dbReference type="SUPFAM" id="SSF53137">
    <property type="entry name" value="Translational machinery components"/>
    <property type="match status" value="1"/>
</dbReference>
<reference key="1">
    <citation type="submission" date="2009-06" db="EMBL/GenBank/DDBJ databases">
        <title>Complete sequence of chromosome of Geopacillus sp. WCH70.</title>
        <authorList>
            <consortium name="US DOE Joint Genome Institute"/>
            <person name="Lucas S."/>
            <person name="Copeland A."/>
            <person name="Lapidus A."/>
            <person name="Glavina del Rio T."/>
            <person name="Dalin E."/>
            <person name="Tice H."/>
            <person name="Bruce D."/>
            <person name="Goodwin L."/>
            <person name="Pitluck S."/>
            <person name="Chertkov O."/>
            <person name="Brettin T."/>
            <person name="Detter J.C."/>
            <person name="Han C."/>
            <person name="Larimer F."/>
            <person name="Land M."/>
            <person name="Hauser L."/>
            <person name="Kyrpides N."/>
            <person name="Mikhailova N."/>
            <person name="Brumm P."/>
            <person name="Mead D.A."/>
            <person name="Richardson P."/>
        </authorList>
    </citation>
    <scope>NUCLEOTIDE SEQUENCE [LARGE SCALE GENOMIC DNA]</scope>
    <source>
        <strain>WCH70</strain>
    </source>
</reference>
<feature type="chain" id="PRO_1000214675" description="Large ribosomal subunit protein uL18">
    <location>
        <begin position="1"/>
        <end position="120"/>
    </location>
</feature>
<sequence length="120" mass="13512">MITKVDRNAVRKKRHARVRKKIFGTAERPRLNVFRSNKHIYAQIIDDMKAVTIVSASTLDKEFDLESTGNIEAAKKVGELVAKRALEKGIKKVVFDRGGYLYHGRVKALADAAREAGLEF</sequence>
<name>RL18_GEOSW</name>
<organism>
    <name type="scientific">Geobacillus sp. (strain WCH70)</name>
    <dbReference type="NCBI Taxonomy" id="471223"/>
    <lineage>
        <taxon>Bacteria</taxon>
        <taxon>Bacillati</taxon>
        <taxon>Bacillota</taxon>
        <taxon>Bacilli</taxon>
        <taxon>Bacillales</taxon>
        <taxon>Anoxybacillaceae</taxon>
        <taxon>Geobacillus</taxon>
    </lineage>
</organism>
<protein>
    <recommendedName>
        <fullName evidence="1">Large ribosomal subunit protein uL18</fullName>
    </recommendedName>
    <alternativeName>
        <fullName evidence="2">50S ribosomal protein L18</fullName>
    </alternativeName>
</protein>
<accession>C5D3T3</accession>
<keyword id="KW-0687">Ribonucleoprotein</keyword>
<keyword id="KW-0689">Ribosomal protein</keyword>
<keyword id="KW-0694">RNA-binding</keyword>
<keyword id="KW-0699">rRNA-binding</keyword>
<gene>
    <name evidence="1" type="primary">rplR</name>
    <name type="ordered locus">GWCH70_0127</name>
</gene>